<evidence type="ECO:0000250" key="1"/>
<evidence type="ECO:0000255" key="2"/>
<evidence type="ECO:0000305" key="3"/>
<accession>Q822F2</accession>
<protein>
    <recommendedName>
        <fullName>Arginine/agmatine antiporter</fullName>
    </recommendedName>
</protein>
<reference key="1">
    <citation type="journal article" date="2003" name="Nucleic Acids Res.">
        <title>Genome sequence of Chlamydophila caviae (Chlamydia psittaci GPIC): examining the role of niche-specific genes in the evolution of the Chlamydiaceae.</title>
        <authorList>
            <person name="Read T.D."/>
            <person name="Myers G.S.A."/>
            <person name="Brunham R.C."/>
            <person name="Nelson W.C."/>
            <person name="Paulsen I.T."/>
            <person name="Heidelberg J.F."/>
            <person name="Holtzapple E.K."/>
            <person name="Khouri H.M."/>
            <person name="Federova N.B."/>
            <person name="Carty H.A."/>
            <person name="Umayam L.A."/>
            <person name="Haft D.H."/>
            <person name="Peterson J.D."/>
            <person name="Beanan M.J."/>
            <person name="White O."/>
            <person name="Salzberg S.L."/>
            <person name="Hsia R.-C."/>
            <person name="McClarty G."/>
            <person name="Rank R.G."/>
            <person name="Bavoil P.M."/>
            <person name="Fraser C.M."/>
        </authorList>
    </citation>
    <scope>NUCLEOTIDE SEQUENCE [LARGE SCALE GENOMIC DNA]</scope>
    <source>
        <strain>ATCC VR-813 / DSM 19441 / 03DC25 / GPIC</strain>
    </source>
</reference>
<sequence length="486" mass="52914">MFLNRGKSKKNLGAIALAGMVISSMIGGGIFSLPQNMAASAGAGAIILAWLLTGIGMFFIANTFKILSLVRPDLTTGIYMYSREGFGPYVGFTIGWGYWLCQIFGNVGYAVMTMDALNYFFPPYFKGGNTIPAIIGGSILIWVFNFIVLKGIRQASFINIIGTVCKLVPLIVFIIITAFAFKLAIFKTDFWGDAVTKTQPALGSVTSQLKSTMLVTLWAFIGIEGAVVMSARAKSPSAVGKATLLGFVGCLTVYILLSILPFGSLFQYQLAGIPNPSTAGVLGMLVGRWGEILMNVGLLIAILSSWLSWTIIVAEIPYTAATNGTFPEIFAIENAQHSPKLSLYITSALMQITMLFVYFSTNAWNTMLSITGVMVLPAYLASAAFLFQFSKNKKYPNKGPVKSYIAKYTGFFAVIYSLWLIYAGGLNYLLMSVILLALGIPFYIDAGKKSKREKTFFAKKEVTKIIIIALLALLAIFLFSTEKIRL</sequence>
<feature type="chain" id="PRO_0000363174" description="Arginine/agmatine antiporter">
    <location>
        <begin position="1"/>
        <end position="486"/>
    </location>
</feature>
<feature type="transmembrane region" description="Helical" evidence="2">
    <location>
        <begin position="12"/>
        <end position="32"/>
    </location>
</feature>
<feature type="transmembrane region" description="Helical" evidence="2">
    <location>
        <begin position="41"/>
        <end position="61"/>
    </location>
</feature>
<feature type="transmembrane region" description="Helical" evidence="2">
    <location>
        <begin position="85"/>
        <end position="105"/>
    </location>
</feature>
<feature type="transmembrane region" description="Helical" evidence="2">
    <location>
        <begin position="129"/>
        <end position="149"/>
    </location>
</feature>
<feature type="transmembrane region" description="Helical" evidence="2">
    <location>
        <begin position="160"/>
        <end position="180"/>
    </location>
</feature>
<feature type="transmembrane region" description="Helical" evidence="2">
    <location>
        <begin position="211"/>
        <end position="231"/>
    </location>
</feature>
<feature type="transmembrane region" description="Helical" evidence="2">
    <location>
        <begin position="242"/>
        <end position="262"/>
    </location>
</feature>
<feature type="transmembrane region" description="Helical" evidence="2">
    <location>
        <begin position="296"/>
        <end position="316"/>
    </location>
</feature>
<feature type="transmembrane region" description="Helical" evidence="2">
    <location>
        <begin position="341"/>
        <end position="361"/>
    </location>
</feature>
<feature type="transmembrane region" description="Helical" evidence="2">
    <location>
        <begin position="367"/>
        <end position="387"/>
    </location>
</feature>
<feature type="transmembrane region" description="Helical" evidence="2">
    <location>
        <begin position="418"/>
        <end position="438"/>
    </location>
</feature>
<feature type="transmembrane region" description="Helical" evidence="2">
    <location>
        <begin position="461"/>
        <end position="481"/>
    </location>
</feature>
<proteinExistence type="inferred from homology"/>
<name>AAXC_CHLCV</name>
<organism>
    <name type="scientific">Chlamydia caviae (strain ATCC VR-813 / DSM 19441 / 03DC25 / GPIC)</name>
    <name type="common">Chlamydophila caviae</name>
    <dbReference type="NCBI Taxonomy" id="227941"/>
    <lineage>
        <taxon>Bacteria</taxon>
        <taxon>Pseudomonadati</taxon>
        <taxon>Chlamydiota</taxon>
        <taxon>Chlamydiia</taxon>
        <taxon>Chlamydiales</taxon>
        <taxon>Chlamydiaceae</taxon>
        <taxon>Chlamydia/Chlamydophila group</taxon>
        <taxon>Chlamydia</taxon>
    </lineage>
</organism>
<comment type="function">
    <text evidence="1">Catalyzes the exchange of L-arginine for agmatine. The arginine uptake by the bacterium in the macrophage may be a virulence factor against the host innate immune response (By similarity).</text>
</comment>
<comment type="subcellular location">
    <subcellularLocation>
        <location evidence="1">Cell inner membrane</location>
        <topology evidence="1">Multi-pass membrane protein</topology>
    </subcellularLocation>
</comment>
<comment type="similarity">
    <text evidence="3">Belongs to the amino acid-polyamine-organocation (APC) superfamily. Basic amino acid/polyamine antiporter (APA) (TC 2.A.3.2) family.</text>
</comment>
<gene>
    <name type="primary">aaxC</name>
    <name type="synonym">arcD</name>
    <name type="ordered locus">CCA_00731</name>
</gene>
<keyword id="KW-0029">Amino-acid transport</keyword>
<keyword id="KW-0050">Antiport</keyword>
<keyword id="KW-0997">Cell inner membrane</keyword>
<keyword id="KW-1003">Cell membrane</keyword>
<keyword id="KW-0472">Membrane</keyword>
<keyword id="KW-0812">Transmembrane</keyword>
<keyword id="KW-1133">Transmembrane helix</keyword>
<keyword id="KW-0813">Transport</keyword>
<keyword id="KW-0843">Virulence</keyword>
<dbReference type="EMBL" id="AE015925">
    <property type="protein sequence ID" value="AAP05472.1"/>
    <property type="molecule type" value="Genomic_DNA"/>
</dbReference>
<dbReference type="RefSeq" id="WP_011006686.1">
    <property type="nucleotide sequence ID" value="NC_003361.3"/>
</dbReference>
<dbReference type="SMR" id="Q822F2"/>
<dbReference type="STRING" id="227941.CCA_00731"/>
<dbReference type="KEGG" id="cca:CCA_00731"/>
<dbReference type="eggNOG" id="COG0531">
    <property type="taxonomic scope" value="Bacteria"/>
</dbReference>
<dbReference type="HOGENOM" id="CLU_007946_1_2_0"/>
<dbReference type="OrthoDB" id="178667at2"/>
<dbReference type="Proteomes" id="UP000002193">
    <property type="component" value="Chromosome"/>
</dbReference>
<dbReference type="GO" id="GO:0005886">
    <property type="term" value="C:plasma membrane"/>
    <property type="evidence" value="ECO:0007669"/>
    <property type="project" value="UniProtKB-SubCell"/>
</dbReference>
<dbReference type="GO" id="GO:0015297">
    <property type="term" value="F:antiporter activity"/>
    <property type="evidence" value="ECO:0007669"/>
    <property type="project" value="UniProtKB-KW"/>
</dbReference>
<dbReference type="GO" id="GO:0006865">
    <property type="term" value="P:amino acid transport"/>
    <property type="evidence" value="ECO:0007669"/>
    <property type="project" value="UniProtKB-KW"/>
</dbReference>
<dbReference type="Gene3D" id="1.20.1740.10">
    <property type="entry name" value="Amino acid/polyamine transporter I"/>
    <property type="match status" value="1"/>
</dbReference>
<dbReference type="InterPro" id="IPR002293">
    <property type="entry name" value="AA/rel_permease1"/>
</dbReference>
<dbReference type="InterPro" id="IPR004754">
    <property type="entry name" value="Amino_acid_antiprt"/>
</dbReference>
<dbReference type="InterPro" id="IPR050367">
    <property type="entry name" value="APC_superfamily"/>
</dbReference>
<dbReference type="NCBIfam" id="TIGR00905">
    <property type="entry name" value="2A0302"/>
    <property type="match status" value="1"/>
</dbReference>
<dbReference type="PANTHER" id="PTHR42770">
    <property type="entry name" value="AMINO ACID TRANSPORTER-RELATED"/>
    <property type="match status" value="1"/>
</dbReference>
<dbReference type="PANTHER" id="PTHR42770:SF4">
    <property type="entry name" value="ARGININE_ORNITHINE ANTIPORTER-RELATED"/>
    <property type="match status" value="1"/>
</dbReference>
<dbReference type="Pfam" id="PF13520">
    <property type="entry name" value="AA_permease_2"/>
    <property type="match status" value="1"/>
</dbReference>
<dbReference type="PIRSF" id="PIRSF006060">
    <property type="entry name" value="AA_transporter"/>
    <property type="match status" value="1"/>
</dbReference>